<keyword id="KW-0687">Ribonucleoprotein</keyword>
<keyword id="KW-0689">Ribosomal protein</keyword>
<keyword id="KW-0694">RNA-binding</keyword>
<keyword id="KW-0699">rRNA-binding</keyword>
<keyword id="KW-0820">tRNA-binding</keyword>
<name>RS7_LEGPC</name>
<reference key="1">
    <citation type="submission" date="2006-11" db="EMBL/GenBank/DDBJ databases">
        <title>Identification and characterization of a new conjugation/ type IVA secretion system (trb/tra) of L. pneumophila Corby localized on a mobile genomic island.</title>
        <authorList>
            <person name="Gloeckner G."/>
            <person name="Albert-Weissenberger C."/>
            <person name="Weinmann E."/>
            <person name="Jacobi S."/>
            <person name="Schunder E."/>
            <person name="Steinert M."/>
            <person name="Buchrieser C."/>
            <person name="Hacker J."/>
            <person name="Heuner K."/>
        </authorList>
    </citation>
    <scope>NUCLEOTIDE SEQUENCE [LARGE SCALE GENOMIC DNA]</scope>
    <source>
        <strain>Corby</strain>
    </source>
</reference>
<sequence>MPRRREVPKREILPDPKHHSELLAKFINVLMVSGKKSIAEKITYGALSVMEERVKKIKKNEEDGSETGSSGSAGAVLRYFEEALDNVRPSVEVRSRRVGGATYQVPVEVRHDRSIALGMRWIVQAARTRGEKGMMLRLAGELMDAYENKGSAVKKREDTHKMAKANQAFAHFRWN</sequence>
<evidence type="ECO:0000255" key="1">
    <source>
        <dbReference type="HAMAP-Rule" id="MF_00480"/>
    </source>
</evidence>
<evidence type="ECO:0000305" key="2"/>
<accession>A5IHR8</accession>
<gene>
    <name evidence="1" type="primary">rpsG</name>
    <name type="ordered locus">LPC_3018</name>
</gene>
<protein>
    <recommendedName>
        <fullName evidence="1">Small ribosomal subunit protein uS7</fullName>
    </recommendedName>
    <alternativeName>
        <fullName evidence="2">30S ribosomal protein S7</fullName>
    </alternativeName>
</protein>
<organism>
    <name type="scientific">Legionella pneumophila (strain Corby)</name>
    <dbReference type="NCBI Taxonomy" id="400673"/>
    <lineage>
        <taxon>Bacteria</taxon>
        <taxon>Pseudomonadati</taxon>
        <taxon>Pseudomonadota</taxon>
        <taxon>Gammaproteobacteria</taxon>
        <taxon>Legionellales</taxon>
        <taxon>Legionellaceae</taxon>
        <taxon>Legionella</taxon>
    </lineage>
</organism>
<feature type="chain" id="PRO_1000014217" description="Small ribosomal subunit protein uS7">
    <location>
        <begin position="1"/>
        <end position="175"/>
    </location>
</feature>
<proteinExistence type="inferred from homology"/>
<comment type="function">
    <text evidence="1">One of the primary rRNA binding proteins, it binds directly to 16S rRNA where it nucleates assembly of the head domain of the 30S subunit. Is located at the subunit interface close to the decoding center, probably blocks exit of the E-site tRNA.</text>
</comment>
<comment type="subunit">
    <text evidence="1">Part of the 30S ribosomal subunit. Contacts proteins S9 and S11.</text>
</comment>
<comment type="similarity">
    <text evidence="1">Belongs to the universal ribosomal protein uS7 family.</text>
</comment>
<dbReference type="EMBL" id="CP000675">
    <property type="protein sequence ID" value="ABQ56918.1"/>
    <property type="molecule type" value="Genomic_DNA"/>
</dbReference>
<dbReference type="RefSeq" id="WP_010946075.1">
    <property type="nucleotide sequence ID" value="NC_009494.2"/>
</dbReference>
<dbReference type="SMR" id="A5IHR8"/>
<dbReference type="GeneID" id="57034328"/>
<dbReference type="KEGG" id="lpc:LPC_3018"/>
<dbReference type="HOGENOM" id="CLU_072226_1_1_6"/>
<dbReference type="GO" id="GO:0015935">
    <property type="term" value="C:small ribosomal subunit"/>
    <property type="evidence" value="ECO:0007669"/>
    <property type="project" value="InterPro"/>
</dbReference>
<dbReference type="GO" id="GO:0019843">
    <property type="term" value="F:rRNA binding"/>
    <property type="evidence" value="ECO:0007669"/>
    <property type="project" value="UniProtKB-UniRule"/>
</dbReference>
<dbReference type="GO" id="GO:0003735">
    <property type="term" value="F:structural constituent of ribosome"/>
    <property type="evidence" value="ECO:0007669"/>
    <property type="project" value="InterPro"/>
</dbReference>
<dbReference type="GO" id="GO:0000049">
    <property type="term" value="F:tRNA binding"/>
    <property type="evidence" value="ECO:0007669"/>
    <property type="project" value="UniProtKB-UniRule"/>
</dbReference>
<dbReference type="GO" id="GO:0006412">
    <property type="term" value="P:translation"/>
    <property type="evidence" value="ECO:0007669"/>
    <property type="project" value="UniProtKB-UniRule"/>
</dbReference>
<dbReference type="CDD" id="cd14869">
    <property type="entry name" value="uS7_Bacteria"/>
    <property type="match status" value="1"/>
</dbReference>
<dbReference type="FunFam" id="1.10.455.10:FF:000001">
    <property type="entry name" value="30S ribosomal protein S7"/>
    <property type="match status" value="1"/>
</dbReference>
<dbReference type="Gene3D" id="1.10.455.10">
    <property type="entry name" value="Ribosomal protein S7 domain"/>
    <property type="match status" value="1"/>
</dbReference>
<dbReference type="HAMAP" id="MF_00480_B">
    <property type="entry name" value="Ribosomal_uS7_B"/>
    <property type="match status" value="1"/>
</dbReference>
<dbReference type="InterPro" id="IPR000235">
    <property type="entry name" value="Ribosomal_uS7"/>
</dbReference>
<dbReference type="InterPro" id="IPR005717">
    <property type="entry name" value="Ribosomal_uS7_bac/org-type"/>
</dbReference>
<dbReference type="InterPro" id="IPR023798">
    <property type="entry name" value="Ribosomal_uS7_dom"/>
</dbReference>
<dbReference type="InterPro" id="IPR036823">
    <property type="entry name" value="Ribosomal_uS7_dom_sf"/>
</dbReference>
<dbReference type="NCBIfam" id="TIGR01029">
    <property type="entry name" value="rpsG_bact"/>
    <property type="match status" value="1"/>
</dbReference>
<dbReference type="PANTHER" id="PTHR11205">
    <property type="entry name" value="RIBOSOMAL PROTEIN S7"/>
    <property type="match status" value="1"/>
</dbReference>
<dbReference type="Pfam" id="PF00177">
    <property type="entry name" value="Ribosomal_S7"/>
    <property type="match status" value="1"/>
</dbReference>
<dbReference type="PIRSF" id="PIRSF002122">
    <property type="entry name" value="RPS7p_RPS7a_RPS5e_RPS7o"/>
    <property type="match status" value="1"/>
</dbReference>
<dbReference type="SUPFAM" id="SSF47973">
    <property type="entry name" value="Ribosomal protein S7"/>
    <property type="match status" value="1"/>
</dbReference>